<evidence type="ECO:0000250" key="1">
    <source>
        <dbReference type="UniProtKB" id="P51157"/>
    </source>
</evidence>
<evidence type="ECO:0000256" key="2">
    <source>
        <dbReference type="SAM" id="MobiDB-lite"/>
    </source>
</evidence>
<evidence type="ECO:0000269" key="3">
    <source>
    </source>
</evidence>
<evidence type="ECO:0000305" key="4"/>
<evidence type="ECO:0000305" key="5">
    <source>
    </source>
</evidence>
<evidence type="ECO:0000312" key="6">
    <source>
        <dbReference type="EMBL" id="AFP33158.1"/>
    </source>
</evidence>
<evidence type="ECO:0000312" key="7">
    <source>
        <dbReference type="Proteomes" id="UP000001940"/>
    </source>
</evidence>
<evidence type="ECO:0000312" key="8">
    <source>
        <dbReference type="WormBase" id="Y11D7A.4"/>
    </source>
</evidence>
<feature type="chain" id="PRO_0000442189" description="Ras-related protein Rab-28" evidence="4">
    <location>
        <begin position="1"/>
        <end position="248"/>
    </location>
</feature>
<feature type="region of interest" description="Disordered" evidence="2">
    <location>
        <begin position="1"/>
        <end position="30"/>
    </location>
</feature>
<feature type="region of interest" description="Disordered" evidence="2">
    <location>
        <begin position="227"/>
        <end position="248"/>
    </location>
</feature>
<feature type="short sequence motif" description="Effector region" evidence="4">
    <location>
        <begin position="64"/>
        <end position="72"/>
    </location>
</feature>
<feature type="compositionally biased region" description="Polar residues" evidence="2">
    <location>
        <begin position="239"/>
        <end position="248"/>
    </location>
</feature>
<feature type="binding site" evidence="5">
    <location>
        <begin position="42"/>
        <end position="50"/>
    </location>
    <ligand>
        <name>GTP</name>
        <dbReference type="ChEBI" id="CHEBI:37565"/>
    </ligand>
</feature>
<feature type="binding site" evidence="5">
    <location>
        <begin position="91"/>
        <end position="95"/>
    </location>
    <ligand>
        <name>GTP</name>
        <dbReference type="ChEBI" id="CHEBI:37565"/>
    </ligand>
</feature>
<feature type="binding site" evidence="1">
    <location>
        <begin position="152"/>
        <end position="155"/>
    </location>
    <ligand>
        <name>GTP</name>
        <dbReference type="ChEBI" id="CHEBI:37565"/>
    </ligand>
</feature>
<feature type="binding site" evidence="1">
    <location>
        <begin position="182"/>
        <end position="184"/>
    </location>
    <ligand>
        <name>GTP</name>
        <dbReference type="ChEBI" id="CHEBI:37565"/>
    </ligand>
</feature>
<feature type="mutagenesis site" description="Expected to give rise to an inactive GDP-bound state. Cilia-related sensory abnormalities and failure to undergo intraflagellar transport." evidence="3">
    <original>T</original>
    <variation>N</variation>
    <location>
        <position position="49"/>
    </location>
</feature>
<feature type="mutagenesis site" description="Expected to give rise to a constitutively active GTP-bound state. Cilia-related sensory abnormalities, but undergoes intraflagellar transport, but at a reduced frequency compared to wild-type." evidence="3">
    <original>Q</original>
    <variation>L</variation>
    <location>
        <position position="95"/>
    </location>
</feature>
<keyword id="KW-1003">Cell membrane</keyword>
<keyword id="KW-0966">Cell projection</keyword>
<keyword id="KW-0969">Cilium</keyword>
<keyword id="KW-0963">Cytoplasm</keyword>
<keyword id="KW-0206">Cytoskeleton</keyword>
<keyword id="KW-0342">GTP-binding</keyword>
<keyword id="KW-0472">Membrane</keyword>
<keyword id="KW-0547">Nucleotide-binding</keyword>
<keyword id="KW-1185">Reference proteome</keyword>
<keyword id="KW-0813">Transport</keyword>
<proteinExistence type="evidence at protein level"/>
<dbReference type="EMBL" id="BX284604">
    <property type="protein sequence ID" value="CAA21582.1"/>
    <property type="molecule type" value="Genomic_DNA"/>
</dbReference>
<dbReference type="EMBL" id="JQ235194">
    <property type="protein sequence ID" value="AFP33158.1"/>
    <property type="molecule type" value="mRNA"/>
</dbReference>
<dbReference type="PIR" id="T26461">
    <property type="entry name" value="T26461"/>
</dbReference>
<dbReference type="RefSeq" id="NP_501609.1">
    <property type="nucleotide sequence ID" value="NM_069208.3"/>
</dbReference>
<dbReference type="SMR" id="Q9XWR6"/>
<dbReference type="FunCoup" id="Q9XWR6">
    <property type="interactions" value="1305"/>
</dbReference>
<dbReference type="STRING" id="6239.Y11D7A.4.1"/>
<dbReference type="PaxDb" id="6239-Y11D7A.4"/>
<dbReference type="EnsemblMetazoa" id="Y11D7A.4.1">
    <property type="protein sequence ID" value="Y11D7A.4.1"/>
    <property type="gene ID" value="WBGene00004281"/>
</dbReference>
<dbReference type="GeneID" id="189429"/>
<dbReference type="KEGG" id="cel:CELE_Y11D7A.4"/>
<dbReference type="UCSC" id="Y11D7A.4">
    <property type="organism name" value="c. elegans"/>
</dbReference>
<dbReference type="AGR" id="WB:WBGene00004281"/>
<dbReference type="CTD" id="189429"/>
<dbReference type="WormBase" id="Y11D7A.4">
    <property type="protein sequence ID" value="CE19030"/>
    <property type="gene ID" value="WBGene00004281"/>
    <property type="gene designation" value="rab-28"/>
</dbReference>
<dbReference type="eggNOG" id="KOG0078">
    <property type="taxonomic scope" value="Eukaryota"/>
</dbReference>
<dbReference type="GeneTree" id="ENSGT00940000164241"/>
<dbReference type="HOGENOM" id="CLU_041217_10_4_1"/>
<dbReference type="InParanoid" id="Q9XWR6"/>
<dbReference type="OMA" id="PHEMQVL"/>
<dbReference type="OrthoDB" id="6585768at2759"/>
<dbReference type="PhylomeDB" id="Q9XWR6"/>
<dbReference type="PRO" id="PR:Q9XWR6"/>
<dbReference type="Proteomes" id="UP000001940">
    <property type="component" value="Chromosome IV"/>
</dbReference>
<dbReference type="Bgee" id="WBGene00004281">
    <property type="expression patterns" value="Expressed in pharyngeal muscle cell (C elegans) and 3 other cell types or tissues"/>
</dbReference>
<dbReference type="GO" id="GO:0005930">
    <property type="term" value="C:axoneme"/>
    <property type="evidence" value="ECO:0000314"/>
    <property type="project" value="UniProtKB"/>
</dbReference>
<dbReference type="GO" id="GO:0097546">
    <property type="term" value="C:ciliary base"/>
    <property type="evidence" value="ECO:0000314"/>
    <property type="project" value="UniProtKB"/>
</dbReference>
<dbReference type="GO" id="GO:0060170">
    <property type="term" value="C:ciliary membrane"/>
    <property type="evidence" value="ECO:0007669"/>
    <property type="project" value="UniProtKB-SubCell"/>
</dbReference>
<dbReference type="GO" id="GO:0035869">
    <property type="term" value="C:ciliary transition zone"/>
    <property type="evidence" value="ECO:0000314"/>
    <property type="project" value="UniProtKB"/>
</dbReference>
<dbReference type="GO" id="GO:0012505">
    <property type="term" value="C:endomembrane system"/>
    <property type="evidence" value="ECO:0000318"/>
    <property type="project" value="GO_Central"/>
</dbReference>
<dbReference type="GO" id="GO:0043025">
    <property type="term" value="C:neuronal cell body"/>
    <property type="evidence" value="ECO:0000314"/>
    <property type="project" value="UniProtKB"/>
</dbReference>
<dbReference type="GO" id="GO:1990075">
    <property type="term" value="C:periciliary membrane compartment"/>
    <property type="evidence" value="ECO:0000314"/>
    <property type="project" value="UniProtKB"/>
</dbReference>
<dbReference type="GO" id="GO:0043204">
    <property type="term" value="C:perikaryon"/>
    <property type="evidence" value="ECO:0007669"/>
    <property type="project" value="UniProtKB-SubCell"/>
</dbReference>
<dbReference type="GO" id="GO:0005525">
    <property type="term" value="F:GTP binding"/>
    <property type="evidence" value="ECO:0007669"/>
    <property type="project" value="UniProtKB-KW"/>
</dbReference>
<dbReference type="GO" id="GO:0003924">
    <property type="term" value="F:GTPase activity"/>
    <property type="evidence" value="ECO:0000318"/>
    <property type="project" value="GO_Central"/>
</dbReference>
<dbReference type="GO" id="GO:0003386">
    <property type="term" value="P:amphid sensory organ development"/>
    <property type="evidence" value="ECO:0000315"/>
    <property type="project" value="UniProtKB"/>
</dbReference>
<dbReference type="GO" id="GO:0035082">
    <property type="term" value="P:axoneme assembly"/>
    <property type="evidence" value="ECO:0000315"/>
    <property type="project" value="UniProtKB"/>
</dbReference>
<dbReference type="GO" id="GO:0006886">
    <property type="term" value="P:intracellular protein transport"/>
    <property type="evidence" value="ECO:0000318"/>
    <property type="project" value="GO_Central"/>
</dbReference>
<dbReference type="GO" id="GO:0035641">
    <property type="term" value="P:locomotory exploration behavior"/>
    <property type="evidence" value="ECO:0000315"/>
    <property type="project" value="UniProtKB"/>
</dbReference>
<dbReference type="GO" id="GO:1902017">
    <property type="term" value="P:regulation of cilium assembly"/>
    <property type="evidence" value="ECO:0000315"/>
    <property type="project" value="UniProtKB"/>
</dbReference>
<dbReference type="CDD" id="cd04109">
    <property type="entry name" value="Rab28"/>
    <property type="match status" value="1"/>
</dbReference>
<dbReference type="FunFam" id="3.40.50.300:FF:001508">
    <property type="entry name" value="Small GTP-binding protein Rab28, putative"/>
    <property type="match status" value="1"/>
</dbReference>
<dbReference type="Gene3D" id="3.40.50.300">
    <property type="entry name" value="P-loop containing nucleotide triphosphate hydrolases"/>
    <property type="match status" value="1"/>
</dbReference>
<dbReference type="InterPro" id="IPR027417">
    <property type="entry name" value="P-loop_NTPase"/>
</dbReference>
<dbReference type="InterPro" id="IPR005225">
    <property type="entry name" value="Small_GTP-bd"/>
</dbReference>
<dbReference type="InterPro" id="IPR001806">
    <property type="entry name" value="Small_GTPase"/>
</dbReference>
<dbReference type="NCBIfam" id="TIGR00231">
    <property type="entry name" value="small_GTP"/>
    <property type="match status" value="1"/>
</dbReference>
<dbReference type="PANTHER" id="PTHR47978">
    <property type="match status" value="1"/>
</dbReference>
<dbReference type="Pfam" id="PF00071">
    <property type="entry name" value="Ras"/>
    <property type="match status" value="1"/>
</dbReference>
<dbReference type="PRINTS" id="PR00449">
    <property type="entry name" value="RASTRNSFRMNG"/>
</dbReference>
<dbReference type="SMART" id="SM00175">
    <property type="entry name" value="RAB"/>
    <property type="match status" value="1"/>
</dbReference>
<dbReference type="SMART" id="SM00176">
    <property type="entry name" value="RAN"/>
    <property type="match status" value="1"/>
</dbReference>
<dbReference type="SMART" id="SM00173">
    <property type="entry name" value="RAS"/>
    <property type="match status" value="1"/>
</dbReference>
<dbReference type="SMART" id="SM00174">
    <property type="entry name" value="RHO"/>
    <property type="match status" value="1"/>
</dbReference>
<dbReference type="SUPFAM" id="SSF52540">
    <property type="entry name" value="P-loop containing nucleoside triphosphate hydrolases"/>
    <property type="match status" value="1"/>
</dbReference>
<dbReference type="PROSITE" id="PS51419">
    <property type="entry name" value="RAB"/>
    <property type="match status" value="1"/>
</dbReference>
<protein>
    <recommendedName>
        <fullName evidence="1">Ras-related protein Rab-28</fullName>
    </recommendedName>
</protein>
<sequence length="248" mass="27319">MTTMGEDEAPALPKKSPLPEKIDEADVDDDPDDKVIKIVVVGDGASGKTSICQRFAKESFDKSYHQTLGLDFFSRRITLPHEMQVLVQVWDIGGQSIAGEMIDKYLTGANIVFLVYDVTNSKSFENAVDWLSVVKKNTKSSETPVKLVLMGNKTDLEERRVVSVEAHKNFATSNDMMPTYVSAKTGDTVFLTFRQAVAEVLNVGLSRAEVEADIEIVQGSVIEQPKQSDASYARRSDQSRSTSVCSIT</sequence>
<name>RAB28_CAEEL</name>
<organism evidence="7">
    <name type="scientific">Caenorhabditis elegans</name>
    <dbReference type="NCBI Taxonomy" id="6239"/>
    <lineage>
        <taxon>Eukaryota</taxon>
        <taxon>Metazoa</taxon>
        <taxon>Ecdysozoa</taxon>
        <taxon>Nematoda</taxon>
        <taxon>Chromadorea</taxon>
        <taxon>Rhabditida</taxon>
        <taxon>Rhabditina</taxon>
        <taxon>Rhabditomorpha</taxon>
        <taxon>Rhabditoidea</taxon>
        <taxon>Rhabditidae</taxon>
        <taxon>Peloderinae</taxon>
        <taxon>Caenorhabditis</taxon>
    </lineage>
</organism>
<accession>Q9XWR6</accession>
<accession>I7EVL1</accession>
<comment type="function">
    <text evidence="3">GTPase. Intraflagellar transport (IFT) cargo that undergoes bidirectional IFT along the ciliary axoneme when in active GTP-bound state in amphid and phasmid ciliated sensory neurons. Targeting and function as IFT cargo may depend on the BBSome, an IFT cargo adapter. Does not undergo IFT when in inactive GDP-bound state. May in turn play a role in cilium structure and/or function in ciliated sensory neurons.</text>
</comment>
<comment type="subcellular location">
    <subcellularLocation>
        <location evidence="3">Cell projection</location>
        <location evidence="3">Cilium membrane</location>
        <topology evidence="3">Peripheral membrane protein</topology>
    </subcellularLocation>
    <subcellularLocation>
        <location evidence="3">Perikaryon</location>
    </subcellularLocation>
    <subcellularLocation>
        <location evidence="3">Cytoplasm</location>
        <location evidence="3">Cytoskeleton</location>
        <location evidence="3">Cilium axoneme</location>
    </subcellularLocation>
    <text evidence="3">In active GTP-bound state, is targeted to the periciliary membrane in a bbs-8-dependent manner. In inactive GDP-bound state, is diffusely localized in the cilium.</text>
</comment>
<comment type="tissue specificity">
    <text evidence="3">Expressed in amphid and phasmid ciliated sensory neurons.</text>
</comment>
<comment type="disruption phenotype">
    <text evidence="3">No visible phenotype, with seemingly normal ciliary structure, and normal transport and function of IFT proteins such as osm-6.</text>
</comment>
<comment type="similarity">
    <text evidence="4">Belongs to the small GTPase superfamily. Rab family.</text>
</comment>
<gene>
    <name evidence="8" type="primary">rab-28</name>
    <name evidence="8" type="ORF">Y11D7A.4</name>
</gene>
<reference evidence="7" key="1">
    <citation type="journal article" date="1998" name="Science">
        <title>Genome sequence of the nematode C. elegans: a platform for investigating biology.</title>
        <authorList>
            <consortium name="The C. elegans sequencing consortium"/>
        </authorList>
    </citation>
    <scope>NUCLEOTIDE SEQUENCE [LARGE SCALE GENOMIC DNA]</scope>
    <source>
        <strain evidence="7">Bristol N2</strain>
    </source>
</reference>
<reference evidence="6" key="2">
    <citation type="journal article" date="2012" name="PLoS ONE">
        <title>The C. elegans Rab family: Identification, classification and toolkit construction.</title>
        <authorList>
            <person name="Gallegos M.E."/>
            <person name="Balakrishnan S."/>
            <person name="Chandramouli P."/>
            <person name="Arora S."/>
            <person name="Azameera A."/>
            <person name="Babushekar A."/>
            <person name="Bargoma E."/>
            <person name="Bokhari A."/>
            <person name="Chava S.K."/>
            <person name="Das P."/>
            <person name="Desai M."/>
            <person name="Decena D."/>
            <person name="Saramma S.D."/>
            <person name="Dey B."/>
            <person name="Doss A.L."/>
            <person name="Gor N."/>
            <person name="Gudiputi L."/>
            <person name="Guo C."/>
            <person name="Hande S."/>
            <person name="Jensen M."/>
            <person name="Jones S."/>
            <person name="Jones N."/>
            <person name="Jorgens D."/>
            <person name="Karamchedu P."/>
            <person name="Kamrani K."/>
            <person name="Kolora L.D."/>
            <person name="Kristensen L."/>
            <person name="Kwan K."/>
            <person name="Lau H."/>
            <person name="Maharaj P."/>
            <person name="Mander N."/>
            <person name="Mangipudi K."/>
            <person name="Menakuru H."/>
            <person name="Mody V."/>
            <person name="Mohanty S."/>
            <person name="Mukkamala S."/>
            <person name="Mundra S.A."/>
            <person name="Nagaraju S."/>
            <person name="Narayanaswamy R."/>
            <person name="Ndungu-Case C."/>
            <person name="Noorbakhsh M."/>
            <person name="Patel J."/>
            <person name="Patel P."/>
            <person name="Pendem S.V."/>
            <person name="Ponakala A."/>
            <person name="Rath M."/>
            <person name="Robles M.C."/>
            <person name="Rokkam D."/>
            <person name="Roth C."/>
            <person name="Sasidharan P."/>
            <person name="Shah S."/>
            <person name="Tandon S."/>
            <person name="Suprai J."/>
            <person name="Truong T.Q."/>
            <person name="Uthayaruban R."/>
            <person name="Varma A."/>
            <person name="Ved U."/>
            <person name="Wang Z."/>
            <person name="Yu Z."/>
        </authorList>
    </citation>
    <scope>NUCLEOTIDE SEQUENCE [MRNA] OF 2-24</scope>
</reference>
<reference evidence="4" key="3">
    <citation type="journal article" date="2016" name="PLoS Genet.">
        <title>Whole-organism developmental expression profiling identifies rab-28 as a novel ciliary GTPase associated with the BBSome and intraflagellar transport.</title>
        <authorList>
            <person name="Jensen V.L."/>
            <person name="Carter S."/>
            <person name="Sanders A.A."/>
            <person name="Li C."/>
            <person name="Kennedy J."/>
            <person name="Timbers T.A."/>
            <person name="Cai J."/>
            <person name="Scheidel N."/>
            <person name="Kennedy B.N."/>
            <person name="Morin R.D."/>
            <person name="Leroux M.R."/>
            <person name="Blacque O.E."/>
        </authorList>
    </citation>
    <scope>FUNCTION</scope>
    <scope>SUBCELLULAR LOCATION</scope>
    <scope>TISSUE SPECIFICITY</scope>
    <scope>DISRUPTION PHENOTYPE</scope>
    <scope>MUTAGENESIS OF THR-49 AND GLN-95</scope>
</reference>